<protein>
    <recommendedName>
        <fullName>Probable periplasmic serine endoprotease DegP-like</fullName>
        <ecNumber>3.4.21.107</ecNumber>
    </recommendedName>
    <alternativeName>
        <fullName>Protease Do</fullName>
    </alternativeName>
</protein>
<comment type="function">
    <text evidence="1">Might be efficient in the degradation of transiently denatured and unfolded proteins which accumulate in the periplasm following stress conditions.</text>
</comment>
<comment type="catalytic activity">
    <reaction>
        <text>Acts on substrates that are at least partially unfolded. The cleavage site P1 residue is normally between a pair of hydrophobic residues, such as Val-|-Val.</text>
        <dbReference type="EC" id="3.4.21.107"/>
    </reaction>
</comment>
<comment type="subcellular location">
    <subcellularLocation>
        <location evidence="4">Periplasm</location>
    </subcellularLocation>
</comment>
<comment type="similarity">
    <text evidence="4">Belongs to the peptidase S1C family.</text>
</comment>
<comment type="sequence caution" evidence="4">
    <conflict type="erroneous initiation">
        <sequence resource="EMBL-CDS" id="AAP98945"/>
    </conflict>
    <text>Truncated N-terminus.</text>
</comment>
<keyword id="KW-0378">Hydrolase</keyword>
<keyword id="KW-0574">Periplasm</keyword>
<keyword id="KW-0645">Protease</keyword>
<keyword id="KW-0677">Repeat</keyword>
<keyword id="KW-0720">Serine protease</keyword>
<keyword id="KW-0732">Signal</keyword>
<keyword id="KW-0346">Stress response</keyword>
<feature type="signal peptide" evidence="2">
    <location>
        <begin position="1"/>
        <end position="20"/>
    </location>
</feature>
<feature type="chain" id="PRO_0000026931" description="Probable periplasmic serine endoprotease DegP-like">
    <location>
        <begin position="21"/>
        <end position="488"/>
    </location>
</feature>
<feature type="domain" description="PDZ 1" evidence="3">
    <location>
        <begin position="281"/>
        <end position="372"/>
    </location>
</feature>
<feature type="domain" description="PDZ 2" evidence="3">
    <location>
        <begin position="388"/>
        <end position="476"/>
    </location>
</feature>
<feature type="region of interest" description="Serine protease">
    <location>
        <begin position="119"/>
        <end position="280"/>
    </location>
</feature>
<feature type="active site" description="Charge relay system" evidence="2">
    <location>
        <position position="134"/>
    </location>
</feature>
<feature type="active site" description="Charge relay system" evidence="2">
    <location>
        <position position="164"/>
    </location>
</feature>
<feature type="active site" description="Charge relay system" evidence="2">
    <location>
        <position position="238"/>
    </location>
</feature>
<feature type="binding site" evidence="1">
    <location>
        <begin position="236"/>
        <end position="238"/>
    </location>
    <ligand>
        <name>substrate</name>
    </ligand>
</feature>
<feature type="binding site" evidence="1">
    <location>
        <begin position="293"/>
        <end position="297"/>
    </location>
    <ligand>
        <name>substrate</name>
    </ligand>
</feature>
<feature type="sequence conflict" description="In Ref. 4; AAP98945." evidence="4" ref="4">
    <original>S</original>
    <variation>G</variation>
    <location>
        <position position="17"/>
    </location>
</feature>
<reference key="1">
    <citation type="journal article" date="1999" name="Nat. Genet.">
        <title>Comparative genomes of Chlamydia pneumoniae and C. trachomatis.</title>
        <authorList>
            <person name="Kalman S."/>
            <person name="Mitchell W.P."/>
            <person name="Marathe R."/>
            <person name="Lammel C.J."/>
            <person name="Fan J."/>
            <person name="Hyman R.W."/>
            <person name="Olinger L."/>
            <person name="Grimwood J."/>
            <person name="Davis R.W."/>
            <person name="Stephens R.S."/>
        </authorList>
    </citation>
    <scope>NUCLEOTIDE SEQUENCE [LARGE SCALE GENOMIC DNA]</scope>
    <source>
        <strain>CWL029</strain>
    </source>
</reference>
<reference key="2">
    <citation type="journal article" date="2000" name="Nucleic Acids Res.">
        <title>Genome sequences of Chlamydia trachomatis MoPn and Chlamydia pneumoniae AR39.</title>
        <authorList>
            <person name="Read T.D."/>
            <person name="Brunham R.C."/>
            <person name="Shen C."/>
            <person name="Gill S.R."/>
            <person name="Heidelberg J.F."/>
            <person name="White O."/>
            <person name="Hickey E.K."/>
            <person name="Peterson J.D."/>
            <person name="Utterback T.R."/>
            <person name="Berry K.J."/>
            <person name="Bass S."/>
            <person name="Linher K.D."/>
            <person name="Weidman J.F."/>
            <person name="Khouri H.M."/>
            <person name="Craven B."/>
            <person name="Bowman C."/>
            <person name="Dodson R.J."/>
            <person name="Gwinn M.L."/>
            <person name="Nelson W.C."/>
            <person name="DeBoy R.T."/>
            <person name="Kolonay J.F."/>
            <person name="McClarty G."/>
            <person name="Salzberg S.L."/>
            <person name="Eisen J.A."/>
            <person name="Fraser C.M."/>
        </authorList>
    </citation>
    <scope>NUCLEOTIDE SEQUENCE [LARGE SCALE GENOMIC DNA]</scope>
    <source>
        <strain>AR39</strain>
    </source>
</reference>
<reference key="3">
    <citation type="journal article" date="2000" name="Nucleic Acids Res.">
        <title>Comparison of whole genome sequences of Chlamydia pneumoniae J138 from Japan and CWL029 from USA.</title>
        <authorList>
            <person name="Shirai M."/>
            <person name="Hirakawa H."/>
            <person name="Kimoto M."/>
            <person name="Tabuchi M."/>
            <person name="Kishi F."/>
            <person name="Ouchi K."/>
            <person name="Shiba T."/>
            <person name="Ishii K."/>
            <person name="Hattori M."/>
            <person name="Kuhara S."/>
            <person name="Nakazawa T."/>
        </authorList>
    </citation>
    <scope>NUCLEOTIDE SEQUENCE [LARGE SCALE GENOMIC DNA]</scope>
    <source>
        <strain>J138</strain>
    </source>
</reference>
<reference key="4">
    <citation type="submission" date="2002-05" db="EMBL/GenBank/DDBJ databases">
        <title>The genome sequence of Chlamydia pneumoniae TW183 and comparison with other Chlamydia strains based on whole genome sequence analysis.</title>
        <authorList>
            <person name="Geng M.M."/>
            <person name="Schuhmacher A."/>
            <person name="Muehldorfer I."/>
            <person name="Bensch K.W."/>
            <person name="Schaefer K.P."/>
            <person name="Schneider S."/>
            <person name="Pohl T."/>
            <person name="Essig A."/>
            <person name="Marre R."/>
            <person name="Melchers K."/>
        </authorList>
    </citation>
    <scope>NUCLEOTIDE SEQUENCE [LARGE SCALE GENOMIC DNA]</scope>
    <source>
        <strain>TW-183</strain>
    </source>
</reference>
<sequence length="488" mass="52311">MITKQLRSWLAVLVGSSLLALPLSGQAVGKKESRVSELPQDVLLKEISGGFSKVATKATPAVVYIESFPKSQAVTHPSPGRRGPYENPFDYFNDEFFNRFFGLPSQREKPQSKEAVRGTGFLVSPDGYIVTNNHVVEDTGKIHVTLHDGQKYPATVIGLDPKTDLAVIKIKSQNLPYLSFGNSDHLKVGDWAIAIGNPFGLQATVTVGVISAKGRNQLHIADFEDFIQTDAAINPGNSGGPLLNIDGQVIGVNTAIVSGSGGYIGIGFAIPSLMANRIIDQLIRDGQVTRGFLGVTLQPIDAELAACYKLEKVYGALVTDVVKGSPADKAGLKQEDVIIAYNGKEVDSLSMFRNAVSLMNPDTRIVLKVVREGKVIEIPVTVSQAPKEDGMSALQRVGIRVQNLTPETAKKLGIAPETKGILIISVEPGSVAASSGIAPGQLILAVNRQKVSSIEDLNRTLKDSNNENILLMVSQGDVIRFIALKPEE</sequence>
<accession>Q9Z6T0</accession>
<accession>Q9JQD7</accession>
<accession>Q9K1W4</accession>
<organism>
    <name type="scientific">Chlamydia pneumoniae</name>
    <name type="common">Chlamydophila pneumoniae</name>
    <dbReference type="NCBI Taxonomy" id="83558"/>
    <lineage>
        <taxon>Bacteria</taxon>
        <taxon>Pseudomonadati</taxon>
        <taxon>Chlamydiota</taxon>
        <taxon>Chlamydiia</taxon>
        <taxon>Chlamydiales</taxon>
        <taxon>Chlamydiaceae</taxon>
        <taxon>Chlamydia/Chlamydophila group</taxon>
        <taxon>Chlamydia</taxon>
    </lineage>
</organism>
<dbReference type="EC" id="3.4.21.107"/>
<dbReference type="EMBL" id="AE001363">
    <property type="protein sequence ID" value="AAD19116.1"/>
    <property type="molecule type" value="Genomic_DNA"/>
</dbReference>
<dbReference type="EMBL" id="AE002161">
    <property type="protein sequence ID" value="AAF38665.1"/>
    <property type="molecule type" value="Genomic_DNA"/>
</dbReference>
<dbReference type="EMBL" id="BA000008">
    <property type="protein sequence ID" value="BAA99186.1"/>
    <property type="molecule type" value="Genomic_DNA"/>
</dbReference>
<dbReference type="EMBL" id="AE009440">
    <property type="protein sequence ID" value="AAP98945.1"/>
    <property type="status" value="ALT_INIT"/>
    <property type="molecule type" value="Genomic_DNA"/>
</dbReference>
<dbReference type="PIR" id="G72011">
    <property type="entry name" value="G72011"/>
</dbReference>
<dbReference type="PIR" id="G81528">
    <property type="entry name" value="G81528"/>
</dbReference>
<dbReference type="PIR" id="H86612">
    <property type="entry name" value="H86612"/>
</dbReference>
<dbReference type="RefSeq" id="NP_225173.1">
    <property type="nucleotide sequence ID" value="NC_000922.1"/>
</dbReference>
<dbReference type="RefSeq" id="WP_010883612.1">
    <property type="nucleotide sequence ID" value="NZ_LN847257.1"/>
</dbReference>
<dbReference type="SMR" id="Q9Z6T0"/>
<dbReference type="STRING" id="406984.CPK_ORF00404"/>
<dbReference type="KEGG" id="cpa:CP_0877"/>
<dbReference type="KEGG" id="cpj:htrA"/>
<dbReference type="KEGG" id="cpn:CPn_0979"/>
<dbReference type="KEGG" id="cpt:CpB1016"/>
<dbReference type="PATRIC" id="fig|115713.3.peg.1074"/>
<dbReference type="eggNOG" id="COG0265">
    <property type="taxonomic scope" value="Bacteria"/>
</dbReference>
<dbReference type="HOGENOM" id="CLU_020120_1_1_0"/>
<dbReference type="OrthoDB" id="9758917at2"/>
<dbReference type="Proteomes" id="UP000000583">
    <property type="component" value="Chromosome"/>
</dbReference>
<dbReference type="Proteomes" id="UP000000801">
    <property type="component" value="Chromosome"/>
</dbReference>
<dbReference type="GO" id="GO:0030288">
    <property type="term" value="C:outer membrane-bounded periplasmic space"/>
    <property type="evidence" value="ECO:0000250"/>
    <property type="project" value="UniProtKB"/>
</dbReference>
<dbReference type="GO" id="GO:0004252">
    <property type="term" value="F:serine-type endopeptidase activity"/>
    <property type="evidence" value="ECO:0000250"/>
    <property type="project" value="UniProtKB"/>
</dbReference>
<dbReference type="GO" id="GO:0006508">
    <property type="term" value="P:proteolysis"/>
    <property type="evidence" value="ECO:0007669"/>
    <property type="project" value="UniProtKB-KW"/>
</dbReference>
<dbReference type="CDD" id="cd10839">
    <property type="entry name" value="cpPDZ1_DegP-like"/>
    <property type="match status" value="1"/>
</dbReference>
<dbReference type="CDD" id="cd23084">
    <property type="entry name" value="cpPDZ2_DegP-like"/>
    <property type="match status" value="1"/>
</dbReference>
<dbReference type="FunFam" id="2.30.42.10:FF:000037">
    <property type="entry name" value="Periplasmic serine endoprotease DegP-like"/>
    <property type="match status" value="1"/>
</dbReference>
<dbReference type="FunFam" id="2.40.10.120:FF:000007">
    <property type="entry name" value="Periplasmic serine endoprotease DegP-like"/>
    <property type="match status" value="1"/>
</dbReference>
<dbReference type="FunFam" id="2.40.10.10:FF:000001">
    <property type="entry name" value="Periplasmic serine protease DegS"/>
    <property type="match status" value="1"/>
</dbReference>
<dbReference type="Gene3D" id="2.30.42.10">
    <property type="match status" value="2"/>
</dbReference>
<dbReference type="Gene3D" id="2.40.10.120">
    <property type="match status" value="1"/>
</dbReference>
<dbReference type="InterPro" id="IPR001478">
    <property type="entry name" value="PDZ"/>
</dbReference>
<dbReference type="InterPro" id="IPR041489">
    <property type="entry name" value="PDZ_6"/>
</dbReference>
<dbReference type="InterPro" id="IPR036034">
    <property type="entry name" value="PDZ_sf"/>
</dbReference>
<dbReference type="InterPro" id="IPR011782">
    <property type="entry name" value="Pept_S1C_Do"/>
</dbReference>
<dbReference type="InterPro" id="IPR009003">
    <property type="entry name" value="Peptidase_S1_PA"/>
</dbReference>
<dbReference type="InterPro" id="IPR001940">
    <property type="entry name" value="Peptidase_S1C"/>
</dbReference>
<dbReference type="NCBIfam" id="TIGR02037">
    <property type="entry name" value="degP_htrA_DO"/>
    <property type="match status" value="1"/>
</dbReference>
<dbReference type="PANTHER" id="PTHR22939">
    <property type="entry name" value="SERINE PROTEASE FAMILY S1C HTRA-RELATED"/>
    <property type="match status" value="1"/>
</dbReference>
<dbReference type="PANTHER" id="PTHR22939:SF129">
    <property type="entry name" value="SERINE PROTEASE HTRA2, MITOCHONDRIAL"/>
    <property type="match status" value="1"/>
</dbReference>
<dbReference type="Pfam" id="PF13180">
    <property type="entry name" value="PDZ_2"/>
    <property type="match status" value="1"/>
</dbReference>
<dbReference type="Pfam" id="PF17820">
    <property type="entry name" value="PDZ_6"/>
    <property type="match status" value="1"/>
</dbReference>
<dbReference type="Pfam" id="PF13365">
    <property type="entry name" value="Trypsin_2"/>
    <property type="match status" value="1"/>
</dbReference>
<dbReference type="PRINTS" id="PR00834">
    <property type="entry name" value="PROTEASES2C"/>
</dbReference>
<dbReference type="SMART" id="SM00228">
    <property type="entry name" value="PDZ"/>
    <property type="match status" value="2"/>
</dbReference>
<dbReference type="SUPFAM" id="SSF50156">
    <property type="entry name" value="PDZ domain-like"/>
    <property type="match status" value="2"/>
</dbReference>
<dbReference type="SUPFAM" id="SSF50494">
    <property type="entry name" value="Trypsin-like serine proteases"/>
    <property type="match status" value="1"/>
</dbReference>
<dbReference type="PROSITE" id="PS50106">
    <property type="entry name" value="PDZ"/>
    <property type="match status" value="2"/>
</dbReference>
<proteinExistence type="inferred from homology"/>
<gene>
    <name type="primary">htrA</name>
    <name type="ordered locus">CPn_0979</name>
    <name type="ordered locus">CP_0877</name>
    <name type="ordered locus">CpB1016</name>
</gene>
<name>DEGPL_CHLPN</name>
<evidence type="ECO:0000250" key="1"/>
<evidence type="ECO:0000255" key="2"/>
<evidence type="ECO:0000255" key="3">
    <source>
        <dbReference type="PROSITE-ProRule" id="PRU00143"/>
    </source>
</evidence>
<evidence type="ECO:0000305" key="4"/>